<protein>
    <recommendedName>
        <fullName>52 kDa cell wall protein</fullName>
    </recommendedName>
</protein>
<organism>
    <name type="scientific">Arabidopsis thaliana</name>
    <name type="common">Mouse-ear cress</name>
    <dbReference type="NCBI Taxonomy" id="3702"/>
    <lineage>
        <taxon>Eukaryota</taxon>
        <taxon>Viridiplantae</taxon>
        <taxon>Streptophyta</taxon>
        <taxon>Embryophyta</taxon>
        <taxon>Tracheophyta</taxon>
        <taxon>Spermatophyta</taxon>
        <taxon>Magnoliopsida</taxon>
        <taxon>eudicotyledons</taxon>
        <taxon>Gunneridae</taxon>
        <taxon>Pentapetalae</taxon>
        <taxon>rosids</taxon>
        <taxon>malvids</taxon>
        <taxon>Brassicales</taxon>
        <taxon>Brassicaceae</taxon>
        <taxon>Camelineae</taxon>
        <taxon>Arabidopsis</taxon>
    </lineage>
</organism>
<evidence type="ECO:0000269" key="1">
    <source>
    </source>
</evidence>
<evidence type="ECO:0000303" key="2">
    <source>
    </source>
</evidence>
<evidence type="ECO:0000305" key="3"/>
<sequence>ATLTVFFRDN</sequence>
<proteinExistence type="evidence at protein level"/>
<feature type="chain" id="PRO_0000079665" description="52 kDa cell wall protein">
    <location>
        <begin position="1"/>
        <end position="10" status="greater than"/>
    </location>
</feature>
<feature type="non-terminal residue" evidence="2">
    <location>
        <position position="10"/>
    </location>
</feature>
<name>CWP12_ARATH</name>
<dbReference type="GO" id="GO:0005576">
    <property type="term" value="C:extracellular region"/>
    <property type="evidence" value="ECO:0007669"/>
    <property type="project" value="UniProtKB-KW"/>
</dbReference>
<accession>P80834</accession>
<comment type="subcellular location">
    <subcellularLocation>
        <location evidence="1">Secreted</location>
        <location evidence="1">Cell wall</location>
    </subcellularLocation>
</comment>
<keyword id="KW-0134">Cell wall</keyword>
<keyword id="KW-0903">Direct protein sequencing</keyword>
<keyword id="KW-0964">Secreted</keyword>
<reference evidence="3" key="1">
    <citation type="journal article" date="1997" name="J. Biol. Chem.">
        <title>Differential extraction and protein sequencing reveals major differences in patterns of primary cell wall proteins from plants.</title>
        <authorList>
            <person name="Robertson D."/>
            <person name="Mitchell G.P."/>
            <person name="Gilroy J.S."/>
            <person name="Gerrish C."/>
            <person name="Bolwell G.P."/>
            <person name="Slabas A.R."/>
        </authorList>
    </citation>
    <scope>PROTEIN SEQUENCE</scope>
    <scope>SUBCELLULAR LOCATION</scope>
    <source>
        <strain>cv. Landsberg erecta</strain>
    </source>
</reference>